<name>CQ058_MOUSE</name>
<feature type="signal peptide" evidence="1">
    <location>
        <begin position="1"/>
        <end position="22"/>
    </location>
</feature>
<feature type="chain" id="PRO_0000279446" description="UPF0450 protein C17orf58 homolog">
    <location>
        <begin position="23"/>
        <end position="305"/>
    </location>
</feature>
<feature type="domain" description="NTR" evidence="2">
    <location>
        <begin position="159"/>
        <end position="304"/>
    </location>
</feature>
<feature type="region of interest" description="Disordered" evidence="3">
    <location>
        <begin position="18"/>
        <end position="160"/>
    </location>
</feature>
<feature type="compositionally biased region" description="Basic and acidic residues" evidence="3">
    <location>
        <begin position="21"/>
        <end position="39"/>
    </location>
</feature>
<feature type="disulfide bond" evidence="2">
    <location>
        <begin position="159"/>
        <end position="233"/>
    </location>
</feature>
<feature type="disulfide bond" evidence="2">
    <location>
        <begin position="163"/>
        <end position="237"/>
    </location>
</feature>
<feature type="disulfide bond" evidence="2">
    <location>
        <begin position="174"/>
        <end position="304"/>
    </location>
</feature>
<protein>
    <recommendedName>
        <fullName>UPF0450 protein C17orf58 homolog</fullName>
    </recommendedName>
</protein>
<accession>Q08AU9</accession>
<accession>A0A1B0GR98</accession>
<evidence type="ECO:0000255" key="1"/>
<evidence type="ECO:0000255" key="2">
    <source>
        <dbReference type="PROSITE-ProRule" id="PRU00295"/>
    </source>
</evidence>
<evidence type="ECO:0000256" key="3">
    <source>
        <dbReference type="SAM" id="MobiDB-lite"/>
    </source>
</evidence>
<evidence type="ECO:0000305" key="4"/>
<comment type="similarity">
    <text evidence="4">Belongs to the UPF0450 family.</text>
</comment>
<comment type="sequence caution" evidence="4">
    <conflict type="erroneous initiation">
        <sequence resource="EMBL-CDS" id="AAI24998"/>
    </conflict>
    <text>Truncated N-terminus.</text>
</comment>
<comment type="sequence caution" evidence="4">
    <conflict type="erroneous initiation">
        <sequence resource="EMBL-CDS" id="AAI25007"/>
    </conflict>
    <text>Truncated N-terminus.</text>
</comment>
<keyword id="KW-1015">Disulfide bond</keyword>
<keyword id="KW-1185">Reference proteome</keyword>
<keyword id="KW-0732">Signal</keyword>
<reference key="1">
    <citation type="journal article" date="2009" name="PLoS Biol.">
        <title>Lineage-specific biology revealed by a finished genome assembly of the mouse.</title>
        <authorList>
            <person name="Church D.M."/>
            <person name="Goodstadt L."/>
            <person name="Hillier L.W."/>
            <person name="Zody M.C."/>
            <person name="Goldstein S."/>
            <person name="She X."/>
            <person name="Bult C.J."/>
            <person name="Agarwala R."/>
            <person name="Cherry J.L."/>
            <person name="DiCuccio M."/>
            <person name="Hlavina W."/>
            <person name="Kapustin Y."/>
            <person name="Meric P."/>
            <person name="Maglott D."/>
            <person name="Birtle Z."/>
            <person name="Marques A.C."/>
            <person name="Graves T."/>
            <person name="Zhou S."/>
            <person name="Teague B."/>
            <person name="Potamousis K."/>
            <person name="Churas C."/>
            <person name="Place M."/>
            <person name="Herschleb J."/>
            <person name="Runnheim R."/>
            <person name="Forrest D."/>
            <person name="Amos-Landgraf J."/>
            <person name="Schwartz D.C."/>
            <person name="Cheng Z."/>
            <person name="Lindblad-Toh K."/>
            <person name="Eichler E.E."/>
            <person name="Ponting C.P."/>
        </authorList>
    </citation>
    <scope>NUCLEOTIDE SEQUENCE [LARGE SCALE GENOMIC DNA]</scope>
    <source>
        <strain>C57BL/6J</strain>
    </source>
</reference>
<reference key="2">
    <citation type="journal article" date="2004" name="Genome Res.">
        <title>The status, quality, and expansion of the NIH full-length cDNA project: the Mammalian Gene Collection (MGC).</title>
        <authorList>
            <consortium name="The MGC Project Team"/>
        </authorList>
    </citation>
    <scope>NUCLEOTIDE SEQUENCE [LARGE SCALE MRNA] OF 179-305</scope>
</reference>
<dbReference type="EMBL" id="GL456158">
    <property type="status" value="NOT_ANNOTATED_CDS"/>
    <property type="molecule type" value="Genomic_DNA"/>
</dbReference>
<dbReference type="EMBL" id="BC124997">
    <property type="protein sequence ID" value="AAI24998.1"/>
    <property type="status" value="ALT_INIT"/>
    <property type="molecule type" value="mRNA"/>
</dbReference>
<dbReference type="EMBL" id="BC125006">
    <property type="protein sequence ID" value="AAI25007.1"/>
    <property type="status" value="ALT_INIT"/>
    <property type="molecule type" value="mRNA"/>
</dbReference>
<dbReference type="RefSeq" id="NP_001156945.1">
    <property type="nucleotide sequence ID" value="NM_001163473.1"/>
</dbReference>
<dbReference type="RefSeq" id="NP_001359431.1">
    <property type="nucleotide sequence ID" value="NM_001372502.1"/>
</dbReference>
<dbReference type="RefSeq" id="XP_017170225.1">
    <property type="nucleotide sequence ID" value="XM_017314736.1"/>
</dbReference>
<dbReference type="STRING" id="10090.ENSMUSP00000148142"/>
<dbReference type="PhosphoSitePlus" id="Q08AU9"/>
<dbReference type="ProteomicsDB" id="307750"/>
<dbReference type="Antibodypedia" id="31734">
    <property type="antibodies" value="65 antibodies from 13 providers"/>
</dbReference>
<dbReference type="Ensembl" id="ENSMUST00000140447.4">
    <property type="protein sequence ID" value="ENSMUSP00000147434.2"/>
    <property type="gene ID" value="ENSMUSG00000078607.7"/>
</dbReference>
<dbReference type="GeneID" id="69066"/>
<dbReference type="KEGG" id="mmu:69066"/>
<dbReference type="UCSC" id="uc007mab.2">
    <property type="organism name" value="mouse"/>
</dbReference>
<dbReference type="AGR" id="MGI:1916316"/>
<dbReference type="MGI" id="MGI:1916316">
    <property type="gene designation" value="1810010H24Rik"/>
</dbReference>
<dbReference type="VEuPathDB" id="HostDB:ENSMUSG00000078607"/>
<dbReference type="GeneTree" id="ENSGT00390000002361"/>
<dbReference type="InParanoid" id="Q08AU9"/>
<dbReference type="OrthoDB" id="9388635at2759"/>
<dbReference type="PhylomeDB" id="Q08AU9"/>
<dbReference type="BioGRID-ORCS" id="69066">
    <property type="hits" value="2 hits in 17 CRISPR screens"/>
</dbReference>
<dbReference type="PRO" id="PR:Q08AU9"/>
<dbReference type="Proteomes" id="UP000000589">
    <property type="component" value="Chromosome 11"/>
</dbReference>
<dbReference type="RNAct" id="Q08AU9">
    <property type="molecule type" value="protein"/>
</dbReference>
<dbReference type="Bgee" id="ENSMUSG00000078607">
    <property type="expression patterns" value="Expressed in right lung lobe and 110 other cell types or tissues"/>
</dbReference>
<dbReference type="Gene3D" id="2.40.50.120">
    <property type="match status" value="1"/>
</dbReference>
<dbReference type="InterPro" id="IPR001134">
    <property type="entry name" value="Netrin_domain"/>
</dbReference>
<dbReference type="InterPro" id="IPR008993">
    <property type="entry name" value="TIMP-like_OB-fold"/>
</dbReference>
<dbReference type="PANTHER" id="PTHR35967">
    <property type="entry name" value="UPF0450 PROTEIN C17ORF58"/>
    <property type="match status" value="1"/>
</dbReference>
<dbReference type="PANTHER" id="PTHR35967:SF1">
    <property type="entry name" value="UPF0450 PROTEIN C17ORF58"/>
    <property type="match status" value="1"/>
</dbReference>
<dbReference type="SUPFAM" id="SSF50242">
    <property type="entry name" value="TIMP-like"/>
    <property type="match status" value="1"/>
</dbReference>
<dbReference type="PROSITE" id="PS50189">
    <property type="entry name" value="NTR"/>
    <property type="match status" value="1"/>
</dbReference>
<organism>
    <name type="scientific">Mus musculus</name>
    <name type="common">Mouse</name>
    <dbReference type="NCBI Taxonomy" id="10090"/>
    <lineage>
        <taxon>Eukaryota</taxon>
        <taxon>Metazoa</taxon>
        <taxon>Chordata</taxon>
        <taxon>Craniata</taxon>
        <taxon>Vertebrata</taxon>
        <taxon>Euteleostomi</taxon>
        <taxon>Mammalia</taxon>
        <taxon>Eutheria</taxon>
        <taxon>Euarchontoglires</taxon>
        <taxon>Glires</taxon>
        <taxon>Rodentia</taxon>
        <taxon>Myomorpha</taxon>
        <taxon>Muroidea</taxon>
        <taxon>Muridae</taxon>
        <taxon>Murinae</taxon>
        <taxon>Mus</taxon>
        <taxon>Mus</taxon>
    </lineage>
</organism>
<sequence length="305" mass="33674">MTARALWLLCLIVGWSPEAPVAERKAPPPHRKPDSRETPGPRAQPLPEFSRRPRAAYAGPRAWPDPRRRKTAPPADNRAGFRDAVHAPAALPGPRLAQAENRASPPEDSPRRALSRAVRPPGARAASPAHPNRPRAAAQPSGTPQALSPEDREPETQSCARACSADADEWEAYCASEFAVNGIVHDVDVLGAGMRLVTLLVDPDGLYKMSRLYITPDGFFFRVHILALDSSSCHKPCPEFKPGSRYIVMGHIYHKRRQLPSALLQVLRGRLRPGDGLIRGSSSYVKRFNRKREWQVRGATHTQCI</sequence>
<proteinExistence type="evidence at transcript level"/>